<protein>
    <recommendedName>
        <fullName evidence="1">Bifunctional purine biosynthesis protein PurH</fullName>
    </recommendedName>
    <domain>
        <recommendedName>
            <fullName evidence="1">Phosphoribosylaminoimidazolecarboxamide formyltransferase</fullName>
            <ecNumber evidence="1">2.1.2.3</ecNumber>
        </recommendedName>
        <alternativeName>
            <fullName evidence="1">AICAR transformylase</fullName>
        </alternativeName>
    </domain>
    <domain>
        <recommendedName>
            <fullName evidence="1">IMP cyclohydrolase</fullName>
            <ecNumber evidence="1">3.5.4.10</ecNumber>
        </recommendedName>
        <alternativeName>
            <fullName evidence="1">ATIC</fullName>
        </alternativeName>
        <alternativeName>
            <fullName evidence="1">IMP synthase</fullName>
        </alternativeName>
        <alternativeName>
            <fullName evidence="1">Inosinicase</fullName>
        </alternativeName>
    </domain>
</protein>
<accession>B0K3Q8</accession>
<proteinExistence type="inferred from homology"/>
<evidence type="ECO:0000255" key="1">
    <source>
        <dbReference type="HAMAP-Rule" id="MF_00139"/>
    </source>
</evidence>
<evidence type="ECO:0000255" key="2">
    <source>
        <dbReference type="PROSITE-ProRule" id="PRU01202"/>
    </source>
</evidence>
<dbReference type="EC" id="2.1.2.3" evidence="1"/>
<dbReference type="EC" id="3.5.4.10" evidence="1"/>
<dbReference type="EMBL" id="CP000923">
    <property type="protein sequence ID" value="ABY91833.1"/>
    <property type="molecule type" value="Genomic_DNA"/>
</dbReference>
<dbReference type="RefSeq" id="WP_009051713.1">
    <property type="nucleotide sequence ID" value="NC_010320.1"/>
</dbReference>
<dbReference type="SMR" id="B0K3Q8"/>
<dbReference type="KEGG" id="tex:Teth514_0525"/>
<dbReference type="HOGENOM" id="CLU_016316_5_2_9"/>
<dbReference type="UniPathway" id="UPA00074">
    <property type="reaction ID" value="UER00133"/>
</dbReference>
<dbReference type="UniPathway" id="UPA00074">
    <property type="reaction ID" value="UER00135"/>
</dbReference>
<dbReference type="Proteomes" id="UP000002155">
    <property type="component" value="Chromosome"/>
</dbReference>
<dbReference type="GO" id="GO:0005829">
    <property type="term" value="C:cytosol"/>
    <property type="evidence" value="ECO:0007669"/>
    <property type="project" value="TreeGrafter"/>
</dbReference>
<dbReference type="GO" id="GO:0003937">
    <property type="term" value="F:IMP cyclohydrolase activity"/>
    <property type="evidence" value="ECO:0007669"/>
    <property type="project" value="UniProtKB-UniRule"/>
</dbReference>
<dbReference type="GO" id="GO:0004643">
    <property type="term" value="F:phosphoribosylaminoimidazolecarboxamide formyltransferase activity"/>
    <property type="evidence" value="ECO:0007669"/>
    <property type="project" value="UniProtKB-UniRule"/>
</dbReference>
<dbReference type="GO" id="GO:0006189">
    <property type="term" value="P:'de novo' IMP biosynthetic process"/>
    <property type="evidence" value="ECO:0007669"/>
    <property type="project" value="UniProtKB-UniRule"/>
</dbReference>
<dbReference type="CDD" id="cd01421">
    <property type="entry name" value="IMPCH"/>
    <property type="match status" value="1"/>
</dbReference>
<dbReference type="FunFam" id="3.40.140.20:FF:000001">
    <property type="entry name" value="Bifunctional purine biosynthesis protein PurH"/>
    <property type="match status" value="1"/>
</dbReference>
<dbReference type="FunFam" id="3.40.140.20:FF:000002">
    <property type="entry name" value="Bifunctional purine biosynthesis protein PurH"/>
    <property type="match status" value="1"/>
</dbReference>
<dbReference type="FunFam" id="3.40.50.1380:FF:000001">
    <property type="entry name" value="Bifunctional purine biosynthesis protein PurH"/>
    <property type="match status" value="1"/>
</dbReference>
<dbReference type="Gene3D" id="3.40.140.20">
    <property type="match status" value="2"/>
</dbReference>
<dbReference type="Gene3D" id="3.40.50.1380">
    <property type="entry name" value="Methylglyoxal synthase-like domain"/>
    <property type="match status" value="1"/>
</dbReference>
<dbReference type="HAMAP" id="MF_00139">
    <property type="entry name" value="PurH"/>
    <property type="match status" value="1"/>
</dbReference>
<dbReference type="InterPro" id="IPR024051">
    <property type="entry name" value="AICAR_Tfase_dup_dom_sf"/>
</dbReference>
<dbReference type="InterPro" id="IPR016193">
    <property type="entry name" value="Cytidine_deaminase-like"/>
</dbReference>
<dbReference type="InterPro" id="IPR011607">
    <property type="entry name" value="MGS-like_dom"/>
</dbReference>
<dbReference type="InterPro" id="IPR036914">
    <property type="entry name" value="MGS-like_dom_sf"/>
</dbReference>
<dbReference type="InterPro" id="IPR002695">
    <property type="entry name" value="PurH-like"/>
</dbReference>
<dbReference type="NCBIfam" id="NF002049">
    <property type="entry name" value="PRK00881.1"/>
    <property type="match status" value="1"/>
</dbReference>
<dbReference type="NCBIfam" id="TIGR00355">
    <property type="entry name" value="purH"/>
    <property type="match status" value="1"/>
</dbReference>
<dbReference type="PANTHER" id="PTHR11692:SF0">
    <property type="entry name" value="BIFUNCTIONAL PURINE BIOSYNTHESIS PROTEIN ATIC"/>
    <property type="match status" value="1"/>
</dbReference>
<dbReference type="PANTHER" id="PTHR11692">
    <property type="entry name" value="BIFUNCTIONAL PURINE BIOSYNTHESIS PROTEIN PURH"/>
    <property type="match status" value="1"/>
</dbReference>
<dbReference type="Pfam" id="PF01808">
    <property type="entry name" value="AICARFT_IMPCHas"/>
    <property type="match status" value="1"/>
</dbReference>
<dbReference type="Pfam" id="PF02142">
    <property type="entry name" value="MGS"/>
    <property type="match status" value="1"/>
</dbReference>
<dbReference type="PIRSF" id="PIRSF000414">
    <property type="entry name" value="AICARFT_IMPCHas"/>
    <property type="match status" value="1"/>
</dbReference>
<dbReference type="SMART" id="SM00798">
    <property type="entry name" value="AICARFT_IMPCHas"/>
    <property type="match status" value="1"/>
</dbReference>
<dbReference type="SMART" id="SM00851">
    <property type="entry name" value="MGS"/>
    <property type="match status" value="1"/>
</dbReference>
<dbReference type="SUPFAM" id="SSF53927">
    <property type="entry name" value="Cytidine deaminase-like"/>
    <property type="match status" value="1"/>
</dbReference>
<dbReference type="SUPFAM" id="SSF52335">
    <property type="entry name" value="Methylglyoxal synthase-like"/>
    <property type="match status" value="1"/>
</dbReference>
<dbReference type="PROSITE" id="PS51855">
    <property type="entry name" value="MGS"/>
    <property type="match status" value="1"/>
</dbReference>
<feature type="chain" id="PRO_1000096104" description="Bifunctional purine biosynthesis protein PurH">
    <location>
        <begin position="1"/>
        <end position="508"/>
    </location>
</feature>
<feature type="domain" description="MGS-like" evidence="2">
    <location>
        <begin position="1"/>
        <end position="145"/>
    </location>
</feature>
<sequence>MAKKALISVSKKEGIVEFAKKLNELGYEIISTGGTYNLLKENRVNVVKVSDITGFPEIMDGRVKTLHPKIHGGLLAIRDNEEHIKALKEHGIEPIDIVVINLYPFKETILKENVTLEEAIENIDIGGPSMIRAAAKNYKYVTILVDPKDYDTVIEEIKQYGNTKEETRFYLAAKAFGHTALYDSLIYNYLIQKNNIEFPEVMAFAYEKAQDMRYGENPHQKAAFYKNPIKAYGIAECEQLHGKELSFNNINDANAAIELLREFKEPAAVAVKHTNPCGVAIADNIYNAYLKAYESDPVSIFGGIVALNRTVDVKTAEELIKIFLEIVIAPDFEEEAFEILKKKKNLRILRLKEGYEKEYDLKKVEGGLLVQEKDEIDLDENNLKVVTKKAPTQKEMEDLRFAWKVVKHVKSNAIVLAKDGATVGIGVGQVNRIWPTEQAIKQAGSKAKGSVLASDAFFPFPDVVEAAVKGGITAIIQPGGSQNDALSIEAADKGGVSMIFTGIRHFKH</sequence>
<keyword id="KW-0378">Hydrolase</keyword>
<keyword id="KW-0511">Multifunctional enzyme</keyword>
<keyword id="KW-0658">Purine biosynthesis</keyword>
<keyword id="KW-0808">Transferase</keyword>
<name>PUR9_THEPX</name>
<comment type="catalytic activity">
    <reaction evidence="1">
        <text>(6R)-10-formyltetrahydrofolate + 5-amino-1-(5-phospho-beta-D-ribosyl)imidazole-4-carboxamide = 5-formamido-1-(5-phospho-D-ribosyl)imidazole-4-carboxamide + (6S)-5,6,7,8-tetrahydrofolate</text>
        <dbReference type="Rhea" id="RHEA:22192"/>
        <dbReference type="ChEBI" id="CHEBI:57453"/>
        <dbReference type="ChEBI" id="CHEBI:58467"/>
        <dbReference type="ChEBI" id="CHEBI:58475"/>
        <dbReference type="ChEBI" id="CHEBI:195366"/>
        <dbReference type="EC" id="2.1.2.3"/>
    </reaction>
</comment>
<comment type="catalytic activity">
    <reaction evidence="1">
        <text>IMP + H2O = 5-formamido-1-(5-phospho-D-ribosyl)imidazole-4-carboxamide</text>
        <dbReference type="Rhea" id="RHEA:18445"/>
        <dbReference type="ChEBI" id="CHEBI:15377"/>
        <dbReference type="ChEBI" id="CHEBI:58053"/>
        <dbReference type="ChEBI" id="CHEBI:58467"/>
        <dbReference type="EC" id="3.5.4.10"/>
    </reaction>
</comment>
<comment type="pathway">
    <text evidence="1">Purine metabolism; IMP biosynthesis via de novo pathway; 5-formamido-1-(5-phospho-D-ribosyl)imidazole-4-carboxamide from 5-amino-1-(5-phospho-D-ribosyl)imidazole-4-carboxamide (10-formyl THF route): step 1/1.</text>
</comment>
<comment type="pathway">
    <text evidence="1">Purine metabolism; IMP biosynthesis via de novo pathway; IMP from 5-formamido-1-(5-phospho-D-ribosyl)imidazole-4-carboxamide: step 1/1.</text>
</comment>
<comment type="domain">
    <text evidence="1">The IMP cyclohydrolase activity resides in the N-terminal region.</text>
</comment>
<comment type="similarity">
    <text evidence="1">Belongs to the PurH family.</text>
</comment>
<organism>
    <name type="scientific">Thermoanaerobacter sp. (strain X514)</name>
    <dbReference type="NCBI Taxonomy" id="399726"/>
    <lineage>
        <taxon>Bacteria</taxon>
        <taxon>Bacillati</taxon>
        <taxon>Bacillota</taxon>
        <taxon>Clostridia</taxon>
        <taxon>Thermoanaerobacterales</taxon>
        <taxon>Thermoanaerobacteraceae</taxon>
        <taxon>Thermoanaerobacter</taxon>
    </lineage>
</organism>
<gene>
    <name evidence="1" type="primary">purH</name>
    <name type="ordered locus">Teth514_0525</name>
</gene>
<reference key="1">
    <citation type="submission" date="2008-01" db="EMBL/GenBank/DDBJ databases">
        <title>Complete sequence of Thermoanaerobacter sp. X514.</title>
        <authorList>
            <consortium name="US DOE Joint Genome Institute"/>
            <person name="Copeland A."/>
            <person name="Lucas S."/>
            <person name="Lapidus A."/>
            <person name="Barry K."/>
            <person name="Glavina del Rio T."/>
            <person name="Dalin E."/>
            <person name="Tice H."/>
            <person name="Pitluck S."/>
            <person name="Bruce D."/>
            <person name="Goodwin L."/>
            <person name="Saunders E."/>
            <person name="Brettin T."/>
            <person name="Detter J.C."/>
            <person name="Han C."/>
            <person name="Schmutz J."/>
            <person name="Larimer F."/>
            <person name="Land M."/>
            <person name="Hauser L."/>
            <person name="Kyrpides N."/>
            <person name="Kim E."/>
            <person name="Hemme C."/>
            <person name="Fields M.W."/>
            <person name="He Z."/>
            <person name="Zhou J."/>
            <person name="Richardson P."/>
        </authorList>
    </citation>
    <scope>NUCLEOTIDE SEQUENCE [LARGE SCALE GENOMIC DNA]</scope>
    <source>
        <strain>X514</strain>
    </source>
</reference>